<proteinExistence type="evidence at transcript level"/>
<evidence type="ECO:0000250" key="1"/>
<evidence type="ECO:0000305" key="2"/>
<protein>
    <recommendedName>
        <fullName>Prolactin</fullName>
        <shortName>PRL</shortName>
    </recommendedName>
</protein>
<comment type="subcellular location">
    <subcellularLocation>
        <location>Secreted</location>
    </subcellularLocation>
</comment>
<comment type="similarity">
    <text evidence="2">Belongs to the somatotropin/prolactin family.</text>
</comment>
<gene>
    <name type="primary">prl</name>
</gene>
<name>PRL_ONCMY</name>
<dbReference type="EMBL" id="M24738">
    <property type="protein sequence ID" value="AAA49611.1"/>
    <property type="molecule type" value="mRNA"/>
</dbReference>
<dbReference type="PIR" id="A31364">
    <property type="entry name" value="A31364"/>
</dbReference>
<dbReference type="RefSeq" id="NP_001118205.1">
    <property type="nucleotide sequence ID" value="NM_001124733.1"/>
</dbReference>
<dbReference type="SMR" id="P21993"/>
<dbReference type="Ensembl" id="ENSOMYT00000057858.2">
    <property type="protein sequence ID" value="ENSOMYP00000053184.1"/>
    <property type="gene ID" value="ENSOMYG00000024343.2"/>
</dbReference>
<dbReference type="GeneID" id="100136792"/>
<dbReference type="KEGG" id="omy:100136792"/>
<dbReference type="CTD" id="5617"/>
<dbReference type="GeneTree" id="ENSGT00950000182818"/>
<dbReference type="OrthoDB" id="9946219at2759"/>
<dbReference type="Proteomes" id="UP000694395">
    <property type="component" value="Chromosome 12"/>
</dbReference>
<dbReference type="GO" id="GO:0005615">
    <property type="term" value="C:extracellular space"/>
    <property type="evidence" value="ECO:0000314"/>
    <property type="project" value="AgBase"/>
</dbReference>
<dbReference type="GO" id="GO:0005179">
    <property type="term" value="F:hormone activity"/>
    <property type="evidence" value="ECO:0007669"/>
    <property type="project" value="UniProtKB-KW"/>
</dbReference>
<dbReference type="GO" id="GO:0005148">
    <property type="term" value="F:prolactin receptor binding"/>
    <property type="evidence" value="ECO:0000315"/>
    <property type="project" value="AgBase"/>
</dbReference>
<dbReference type="GO" id="GO:0016176">
    <property type="term" value="F:superoxide-generating NADPH oxidase activator activity"/>
    <property type="evidence" value="ECO:0000250"/>
    <property type="project" value="AgBase"/>
</dbReference>
<dbReference type="GO" id="GO:0007259">
    <property type="term" value="P:cell surface receptor signaling pathway via JAK-STAT"/>
    <property type="evidence" value="ECO:0000250"/>
    <property type="project" value="AgBase"/>
</dbReference>
<dbReference type="GO" id="GO:0010629">
    <property type="term" value="P:negative regulation of gene expression"/>
    <property type="evidence" value="ECO:0000250"/>
    <property type="project" value="AgBase"/>
</dbReference>
<dbReference type="GO" id="GO:0010628">
    <property type="term" value="P:positive regulation of gene expression"/>
    <property type="evidence" value="ECO:0000250"/>
    <property type="project" value="AgBase"/>
</dbReference>
<dbReference type="GO" id="GO:0070665">
    <property type="term" value="P:positive regulation of leukocyte proliferation"/>
    <property type="evidence" value="ECO:0000314"/>
    <property type="project" value="AgBase"/>
</dbReference>
<dbReference type="GO" id="GO:0050766">
    <property type="term" value="P:positive regulation of phagocytosis"/>
    <property type="evidence" value="ECO:0000250"/>
    <property type="project" value="AgBase"/>
</dbReference>
<dbReference type="GO" id="GO:1903428">
    <property type="term" value="P:positive regulation of reactive oxygen species biosynthetic process"/>
    <property type="evidence" value="ECO:0000250"/>
    <property type="project" value="AgBase"/>
</dbReference>
<dbReference type="GO" id="GO:0046427">
    <property type="term" value="P:positive regulation of receptor signaling pathway via JAK-STAT"/>
    <property type="evidence" value="ECO:0007669"/>
    <property type="project" value="TreeGrafter"/>
</dbReference>
<dbReference type="GO" id="GO:0060267">
    <property type="term" value="P:positive regulation of respiratory burst"/>
    <property type="evidence" value="ECO:0000250"/>
    <property type="project" value="AgBase"/>
</dbReference>
<dbReference type="GO" id="GO:0032930">
    <property type="term" value="P:positive regulation of superoxide anion generation"/>
    <property type="evidence" value="ECO:0000250"/>
    <property type="project" value="AgBase"/>
</dbReference>
<dbReference type="GO" id="GO:0002637">
    <property type="term" value="P:regulation of immunoglobulin production"/>
    <property type="evidence" value="ECO:0000250"/>
    <property type="project" value="AgBase"/>
</dbReference>
<dbReference type="GO" id="GO:0031667">
    <property type="term" value="P:response to nutrient levels"/>
    <property type="evidence" value="ECO:0007669"/>
    <property type="project" value="TreeGrafter"/>
</dbReference>
<dbReference type="GO" id="GO:0043434">
    <property type="term" value="P:response to peptide hormone"/>
    <property type="evidence" value="ECO:0000315"/>
    <property type="project" value="AgBase"/>
</dbReference>
<dbReference type="FunFam" id="1.20.1250.10:FF:000037">
    <property type="entry name" value="Prolactin"/>
    <property type="match status" value="1"/>
</dbReference>
<dbReference type="Gene3D" id="1.20.1250.10">
    <property type="match status" value="1"/>
</dbReference>
<dbReference type="InterPro" id="IPR009079">
    <property type="entry name" value="4_helix_cytokine-like_core"/>
</dbReference>
<dbReference type="InterPro" id="IPR001400">
    <property type="entry name" value="Somatotropin/Prolactin"/>
</dbReference>
<dbReference type="InterPro" id="IPR018116">
    <property type="entry name" value="Somatotropin_CS"/>
</dbReference>
<dbReference type="PANTHER" id="PTHR11417:SF5">
    <property type="entry name" value="PROLACTIN"/>
    <property type="match status" value="1"/>
</dbReference>
<dbReference type="PANTHER" id="PTHR11417">
    <property type="entry name" value="SOMATOTROPIN,PROLACTIN"/>
    <property type="match status" value="1"/>
</dbReference>
<dbReference type="Pfam" id="PF00103">
    <property type="entry name" value="Hormone_1"/>
    <property type="match status" value="1"/>
</dbReference>
<dbReference type="PRINTS" id="PR00836">
    <property type="entry name" value="SOMATOTROPIN"/>
</dbReference>
<dbReference type="SUPFAM" id="SSF47266">
    <property type="entry name" value="4-helical cytokines"/>
    <property type="match status" value="1"/>
</dbReference>
<dbReference type="PROSITE" id="PS00266">
    <property type="entry name" value="SOMATOTROPIN_1"/>
    <property type="match status" value="1"/>
</dbReference>
<dbReference type="PROSITE" id="PS00338">
    <property type="entry name" value="SOMATOTROPIN_2"/>
    <property type="match status" value="1"/>
</dbReference>
<reference key="1">
    <citation type="journal article" date="1989" name="DNA">
        <title>Rainbow trout prolactin cDNA cloning in Escherichia coli.</title>
        <authorList>
            <person name="Mercier L."/>
            <person name="Rentier-Delrue F."/>
            <person name="Swennen D."/>
            <person name="Lion M."/>
            <person name="le Goff P."/>
            <person name="Prunet P."/>
            <person name="Martial J.A."/>
        </authorList>
    </citation>
    <scope>NUCLEOTIDE SEQUENCE [MRNA]</scope>
</reference>
<keyword id="KW-1015">Disulfide bond</keyword>
<keyword id="KW-0372">Hormone</keyword>
<keyword id="KW-0964">Secreted</keyword>
<keyword id="KW-0732">Signal</keyword>
<organism>
    <name type="scientific">Oncorhynchus mykiss</name>
    <name type="common">Rainbow trout</name>
    <name type="synonym">Salmo gairdneri</name>
    <dbReference type="NCBI Taxonomy" id="8022"/>
    <lineage>
        <taxon>Eukaryota</taxon>
        <taxon>Metazoa</taxon>
        <taxon>Chordata</taxon>
        <taxon>Craniata</taxon>
        <taxon>Vertebrata</taxon>
        <taxon>Euteleostomi</taxon>
        <taxon>Actinopterygii</taxon>
        <taxon>Neopterygii</taxon>
        <taxon>Teleostei</taxon>
        <taxon>Protacanthopterygii</taxon>
        <taxon>Salmoniformes</taxon>
        <taxon>Salmonidae</taxon>
        <taxon>Salmoninae</taxon>
        <taxon>Oncorhynchus</taxon>
    </lineage>
</organism>
<accession>P21993</accession>
<feature type="signal peptide">
    <location>
        <begin position="1"/>
        <end position="23"/>
    </location>
</feature>
<feature type="chain" id="PRO_0000032941" description="Prolactin">
    <location>
        <begin position="24"/>
        <end position="210"/>
    </location>
</feature>
<feature type="disulfide bond" evidence="1">
    <location>
        <begin position="69"/>
        <end position="183"/>
    </location>
</feature>
<feature type="disulfide bond" evidence="1">
    <location>
        <begin position="200"/>
        <end position="210"/>
    </location>
</feature>
<sequence>MARRSQGTKLHLAVLCLVVSCHAIGLSDLMERASQRSDKLHSLSTSLTKDLDSHFPPMGRVMMPRPSMCHTSSLQTPKDKEQALKVSENELISLARSLLLAWNDPLLLLSSEAPTLPHPSNGDISSKIRELQDYSKSLGDGLDIMVNKMGPSSQYISSIPFKGGDLGNDKTSRLINFHFLMSCFRRDSHKIDSFLKVLRCRATKMRPEAC</sequence>